<gene>
    <name evidence="1" type="primary">rplP</name>
    <name type="ordered locus">BG0497</name>
</gene>
<protein>
    <recommendedName>
        <fullName evidence="1">Large ribosomal subunit protein uL16</fullName>
    </recommendedName>
    <alternativeName>
        <fullName evidence="3">50S ribosomal protein L16</fullName>
    </alternativeName>
</protein>
<evidence type="ECO:0000255" key="1">
    <source>
        <dbReference type="HAMAP-Rule" id="MF_01342"/>
    </source>
</evidence>
<evidence type="ECO:0000256" key="2">
    <source>
        <dbReference type="SAM" id="MobiDB-lite"/>
    </source>
</evidence>
<evidence type="ECO:0000305" key="3"/>
<name>RL16_BORGP</name>
<proteinExistence type="inferred from homology"/>
<dbReference type="EMBL" id="CP000013">
    <property type="protein sequence ID" value="AAU07336.1"/>
    <property type="molecule type" value="Genomic_DNA"/>
</dbReference>
<dbReference type="RefSeq" id="WP_011193804.1">
    <property type="nucleotide sequence ID" value="NZ_CP028872.1"/>
</dbReference>
<dbReference type="SMR" id="Q661D5"/>
<dbReference type="GeneID" id="45161280"/>
<dbReference type="KEGG" id="bga:BG0497"/>
<dbReference type="eggNOG" id="COG0197">
    <property type="taxonomic scope" value="Bacteria"/>
</dbReference>
<dbReference type="HOGENOM" id="CLU_078858_2_1_12"/>
<dbReference type="OrthoDB" id="9802589at2"/>
<dbReference type="Proteomes" id="UP000002276">
    <property type="component" value="Chromosome"/>
</dbReference>
<dbReference type="GO" id="GO:0022625">
    <property type="term" value="C:cytosolic large ribosomal subunit"/>
    <property type="evidence" value="ECO:0007669"/>
    <property type="project" value="TreeGrafter"/>
</dbReference>
<dbReference type="GO" id="GO:0019843">
    <property type="term" value="F:rRNA binding"/>
    <property type="evidence" value="ECO:0007669"/>
    <property type="project" value="UniProtKB-UniRule"/>
</dbReference>
<dbReference type="GO" id="GO:0003735">
    <property type="term" value="F:structural constituent of ribosome"/>
    <property type="evidence" value="ECO:0007669"/>
    <property type="project" value="InterPro"/>
</dbReference>
<dbReference type="GO" id="GO:0000049">
    <property type="term" value="F:tRNA binding"/>
    <property type="evidence" value="ECO:0007669"/>
    <property type="project" value="UniProtKB-KW"/>
</dbReference>
<dbReference type="GO" id="GO:0006412">
    <property type="term" value="P:translation"/>
    <property type="evidence" value="ECO:0007669"/>
    <property type="project" value="UniProtKB-UniRule"/>
</dbReference>
<dbReference type="CDD" id="cd01433">
    <property type="entry name" value="Ribosomal_L16_L10e"/>
    <property type="match status" value="1"/>
</dbReference>
<dbReference type="FunFam" id="3.90.1170.10:FF:000001">
    <property type="entry name" value="50S ribosomal protein L16"/>
    <property type="match status" value="1"/>
</dbReference>
<dbReference type="Gene3D" id="3.90.1170.10">
    <property type="entry name" value="Ribosomal protein L10e/L16"/>
    <property type="match status" value="1"/>
</dbReference>
<dbReference type="HAMAP" id="MF_01342">
    <property type="entry name" value="Ribosomal_uL16"/>
    <property type="match status" value="1"/>
</dbReference>
<dbReference type="InterPro" id="IPR047873">
    <property type="entry name" value="Ribosomal_uL16"/>
</dbReference>
<dbReference type="InterPro" id="IPR000114">
    <property type="entry name" value="Ribosomal_uL16_bact-type"/>
</dbReference>
<dbReference type="InterPro" id="IPR020798">
    <property type="entry name" value="Ribosomal_uL16_CS"/>
</dbReference>
<dbReference type="InterPro" id="IPR016180">
    <property type="entry name" value="Ribosomal_uL16_dom"/>
</dbReference>
<dbReference type="InterPro" id="IPR036920">
    <property type="entry name" value="Ribosomal_uL16_sf"/>
</dbReference>
<dbReference type="NCBIfam" id="TIGR01164">
    <property type="entry name" value="rplP_bact"/>
    <property type="match status" value="1"/>
</dbReference>
<dbReference type="PANTHER" id="PTHR12220">
    <property type="entry name" value="50S/60S RIBOSOMAL PROTEIN L16"/>
    <property type="match status" value="1"/>
</dbReference>
<dbReference type="PANTHER" id="PTHR12220:SF13">
    <property type="entry name" value="LARGE RIBOSOMAL SUBUNIT PROTEIN UL16M"/>
    <property type="match status" value="1"/>
</dbReference>
<dbReference type="Pfam" id="PF00252">
    <property type="entry name" value="Ribosomal_L16"/>
    <property type="match status" value="1"/>
</dbReference>
<dbReference type="PRINTS" id="PR00060">
    <property type="entry name" value="RIBOSOMALL16"/>
</dbReference>
<dbReference type="SUPFAM" id="SSF54686">
    <property type="entry name" value="Ribosomal protein L16p/L10e"/>
    <property type="match status" value="1"/>
</dbReference>
<dbReference type="PROSITE" id="PS00586">
    <property type="entry name" value="RIBOSOMAL_L16_1"/>
    <property type="match status" value="1"/>
</dbReference>
<dbReference type="PROSITE" id="PS00701">
    <property type="entry name" value="RIBOSOMAL_L16_2"/>
    <property type="match status" value="1"/>
</dbReference>
<accession>Q661D5</accession>
<reference key="1">
    <citation type="journal article" date="2004" name="Nucleic Acids Res.">
        <title>Comparative analysis of the Borrelia garinii genome.</title>
        <authorList>
            <person name="Gloeckner G."/>
            <person name="Lehmann R."/>
            <person name="Romualdi A."/>
            <person name="Pradella S."/>
            <person name="Schulte-Spechtel U."/>
            <person name="Schilhabel M."/>
            <person name="Wilske B."/>
            <person name="Suehnel J."/>
            <person name="Platzer M."/>
        </authorList>
    </citation>
    <scope>NUCLEOTIDE SEQUENCE [LARGE SCALE GENOMIC DNA]</scope>
    <source>
        <strain>ATCC BAA-2496 / DSM 23469 / PBi</strain>
    </source>
</reference>
<keyword id="KW-0687">Ribonucleoprotein</keyword>
<keyword id="KW-0689">Ribosomal protein</keyword>
<keyword id="KW-0694">RNA-binding</keyword>
<keyword id="KW-0699">rRNA-binding</keyword>
<keyword id="KW-0820">tRNA-binding</keyword>
<organism>
    <name type="scientific">Borrelia garinii subsp. bavariensis (strain ATCC BAA-2496 / DSM 23469 / PBi)</name>
    <name type="common">Borreliella bavariensis</name>
    <dbReference type="NCBI Taxonomy" id="290434"/>
    <lineage>
        <taxon>Bacteria</taxon>
        <taxon>Pseudomonadati</taxon>
        <taxon>Spirochaetota</taxon>
        <taxon>Spirochaetia</taxon>
        <taxon>Spirochaetales</taxon>
        <taxon>Borreliaceae</taxon>
        <taxon>Borreliella</taxon>
    </lineage>
</organism>
<comment type="function">
    <text evidence="1">Binds 23S rRNA and is also seen to make contacts with the A and possibly P site tRNAs.</text>
</comment>
<comment type="subunit">
    <text evidence="1">Part of the 50S ribosomal subunit.</text>
</comment>
<comment type="similarity">
    <text evidence="1">Belongs to the universal ribosomal protein uL16 family.</text>
</comment>
<sequence>MLSPKKVKYRKKQRGRLSGEAQKGNKISFGEYGLVSLETSFITARQIEAARIAMTRKIKRGGRVWIRIFPDIPYTKKPAETRMGKGKGGVDHWNAPVKLGTVMFEMAGVIEELAQEAMSLASSKLPVKTMFVVRRDLR</sequence>
<feature type="chain" id="PRO_0000062058" description="Large ribosomal subunit protein uL16">
    <location>
        <begin position="1"/>
        <end position="138"/>
    </location>
</feature>
<feature type="region of interest" description="Disordered" evidence="2">
    <location>
        <begin position="1"/>
        <end position="21"/>
    </location>
</feature>
<feature type="compositionally biased region" description="Basic residues" evidence="2">
    <location>
        <begin position="1"/>
        <end position="15"/>
    </location>
</feature>